<dbReference type="EMBL" id="BC079262">
    <property type="protein sequence ID" value="AAH79262.1"/>
    <property type="molecule type" value="mRNA"/>
</dbReference>
<dbReference type="RefSeq" id="NP_001019468.1">
    <property type="nucleotide sequence ID" value="NM_001024297.1"/>
</dbReference>
<dbReference type="SMR" id="Q6AXY9"/>
<dbReference type="FunCoup" id="Q6AXY9">
    <property type="interactions" value="1"/>
</dbReference>
<dbReference type="STRING" id="10116.ENSRNOP00000017408"/>
<dbReference type="iPTMnet" id="Q6AXY9"/>
<dbReference type="PhosphoSitePlus" id="Q6AXY9"/>
<dbReference type="PaxDb" id="10116-ENSRNOP00000017408"/>
<dbReference type="Ensembl" id="ENSRNOT00000017408.7">
    <property type="protein sequence ID" value="ENSRNOP00000017408.5"/>
    <property type="gene ID" value="ENSRNOG00000013050.7"/>
</dbReference>
<dbReference type="GeneID" id="499510"/>
<dbReference type="KEGG" id="rno:499510"/>
<dbReference type="UCSC" id="RGD:1562395">
    <property type="organism name" value="rat"/>
</dbReference>
<dbReference type="AGR" id="RGD:1562395"/>
<dbReference type="CTD" id="84654"/>
<dbReference type="RGD" id="1562395">
    <property type="gene designation" value="Spz1"/>
</dbReference>
<dbReference type="eggNOG" id="ENOG502QS87">
    <property type="taxonomic scope" value="Eukaryota"/>
</dbReference>
<dbReference type="GeneTree" id="ENSGT00950000182767"/>
<dbReference type="HOGENOM" id="CLU_062447_0_0_1"/>
<dbReference type="InParanoid" id="Q6AXY9"/>
<dbReference type="OMA" id="ECQILEQ"/>
<dbReference type="OrthoDB" id="83184at9989"/>
<dbReference type="PhylomeDB" id="Q6AXY9"/>
<dbReference type="TreeFam" id="TF337798"/>
<dbReference type="PRO" id="PR:Q6AXY9"/>
<dbReference type="Proteomes" id="UP000002494">
    <property type="component" value="Chromosome 2"/>
</dbReference>
<dbReference type="Bgee" id="ENSRNOG00000013050">
    <property type="expression patterns" value="Expressed in testis"/>
</dbReference>
<dbReference type="GO" id="GO:0005737">
    <property type="term" value="C:cytoplasm"/>
    <property type="evidence" value="ECO:0007669"/>
    <property type="project" value="UniProtKB-SubCell"/>
</dbReference>
<dbReference type="GO" id="GO:0005634">
    <property type="term" value="C:nucleus"/>
    <property type="evidence" value="ECO:0000266"/>
    <property type="project" value="RGD"/>
</dbReference>
<dbReference type="GO" id="GO:0000981">
    <property type="term" value="F:DNA-binding transcription factor activity, RNA polymerase II-specific"/>
    <property type="evidence" value="ECO:0000266"/>
    <property type="project" value="RGD"/>
</dbReference>
<dbReference type="GO" id="GO:0070888">
    <property type="term" value="F:E-box binding"/>
    <property type="evidence" value="ECO:0000266"/>
    <property type="project" value="RGD"/>
</dbReference>
<dbReference type="GO" id="GO:0045944">
    <property type="term" value="P:positive regulation of transcription by RNA polymerase II"/>
    <property type="evidence" value="ECO:0000266"/>
    <property type="project" value="RGD"/>
</dbReference>
<dbReference type="InterPro" id="IPR042961">
    <property type="entry name" value="Spz1"/>
</dbReference>
<dbReference type="PANTHER" id="PTHR47889">
    <property type="entry name" value="SPERMATOGENIC LEUCINE ZIPPER PROTEIN 1"/>
    <property type="match status" value="1"/>
</dbReference>
<dbReference type="PANTHER" id="PTHR47889:SF1">
    <property type="entry name" value="SPERMATOGENIC LEUCINE ZIPPER PROTEIN 1"/>
    <property type="match status" value="1"/>
</dbReference>
<sequence length="400" mass="45814">MADSDSSSEMPAHSPSPSPIPCAKQKPPNTGITISLLEIGSLPTFCCSSFSEPNNNMCPIRKQGKVQKFSNLLKDVKDVLKNIAGFEEKTTDGDPFDDTYIPEDLSELNIRGFDKRNKLRFKDDLFIHFDPERENTMRQEMLFKSHSAKNMVQKFARDLCNSEEKRGCDGVQLNAKRRRTGSVHIRGEYRKLRNNMEQLLQEADHWSKQHNELSELMRSYQECHKEIKDIVDCSRVCSQTQNNNEVPSKQKLEEQVKKLSQDTHSLHLIAALLENECQILQQRVDILRELHLHEAGPGHEKPLQTSGEQDKKCGEQDKKCGEQDKKCGEQDKKCPKLAEAEKMDGSKHTMKTTEGTITRKPKIFRCPNDCLTKKARNNRFNARVAKKSLVGKRRTISSFR</sequence>
<accession>Q6AXY9</accession>
<reference key="1">
    <citation type="journal article" date="2004" name="Genome Res.">
        <title>The status, quality, and expansion of the NIH full-length cDNA project: the Mammalian Gene Collection (MGC).</title>
        <authorList>
            <consortium name="The MGC Project Team"/>
        </authorList>
    </citation>
    <scope>NUCLEOTIDE SEQUENCE [LARGE SCALE MRNA]</scope>
    <source>
        <tissue>Testis</tissue>
    </source>
</reference>
<reference key="2">
    <citation type="journal article" date="2012" name="Nat. Commun.">
        <title>Quantitative maps of protein phosphorylation sites across 14 different rat organs and tissues.</title>
        <authorList>
            <person name="Lundby A."/>
            <person name="Secher A."/>
            <person name="Lage K."/>
            <person name="Nordsborg N.B."/>
            <person name="Dmytriyev A."/>
            <person name="Lundby C."/>
            <person name="Olsen J.V."/>
        </authorList>
    </citation>
    <scope>PHOSPHORYLATION [LARGE SCALE ANALYSIS] AT SER-106 AND SER-207</scope>
    <scope>IDENTIFICATION BY MASS SPECTROMETRY [LARGE SCALE ANALYSIS]</scope>
</reference>
<gene>
    <name type="primary">Spz1</name>
</gene>
<name>SPZ1_RAT</name>
<organism>
    <name type="scientific">Rattus norvegicus</name>
    <name type="common">Rat</name>
    <dbReference type="NCBI Taxonomy" id="10116"/>
    <lineage>
        <taxon>Eukaryota</taxon>
        <taxon>Metazoa</taxon>
        <taxon>Chordata</taxon>
        <taxon>Craniata</taxon>
        <taxon>Vertebrata</taxon>
        <taxon>Euteleostomi</taxon>
        <taxon>Mammalia</taxon>
        <taxon>Eutheria</taxon>
        <taxon>Euarchontoglires</taxon>
        <taxon>Glires</taxon>
        <taxon>Rodentia</taxon>
        <taxon>Myomorpha</taxon>
        <taxon>Muroidea</taxon>
        <taxon>Muridae</taxon>
        <taxon>Murinae</taxon>
        <taxon>Rattus</taxon>
    </lineage>
</organism>
<feature type="chain" id="PRO_0000280509" description="Spermatogenic leucine zipper protein 1">
    <location>
        <begin position="1"/>
        <end position="400"/>
    </location>
</feature>
<feature type="region of interest" description="Disordered" evidence="3">
    <location>
        <begin position="1"/>
        <end position="27"/>
    </location>
</feature>
<feature type="region of interest" description="Helix-loop-helix motif" evidence="2">
    <location>
        <begin position="116"/>
        <end position="127"/>
    </location>
</feature>
<feature type="region of interest" description="Basic motif" evidence="2">
    <location>
        <begin position="128"/>
        <end position="193"/>
    </location>
</feature>
<feature type="region of interest" description="Leucine-zipper">
    <location>
        <begin position="252"/>
        <end position="273"/>
    </location>
</feature>
<feature type="region of interest" description="Disordered" evidence="3">
    <location>
        <begin position="295"/>
        <end position="332"/>
    </location>
</feature>
<feature type="coiled-coil region" evidence="2">
    <location>
        <begin position="182"/>
        <end position="231"/>
    </location>
</feature>
<feature type="coiled-coil region" evidence="2">
    <location>
        <begin position="268"/>
        <end position="293"/>
    </location>
</feature>
<feature type="modified residue" description="Phosphoserine" evidence="4">
    <location>
        <position position="106"/>
    </location>
</feature>
<feature type="modified residue" description="Phosphoserine" evidence="4">
    <location>
        <position position="207"/>
    </location>
</feature>
<proteinExistence type="evidence at protein level"/>
<comment type="function">
    <text evidence="1">Transcription factor that binds to the DNA sequence 5'-CANNTG-3'(E box) and the G-box motif. May play an important role in the regulation of cell proliferation and differentiation during spermatogenesis (By similarity).</text>
</comment>
<comment type="subunit">
    <text evidence="1">Interacts with PPP1CC isoform gamma-2.</text>
</comment>
<comment type="subcellular location">
    <subcellularLocation>
        <location evidence="1">Cytoplasm</location>
    </subcellularLocation>
    <subcellularLocation>
        <location evidence="1">Nucleus</location>
    </subcellularLocation>
</comment>
<comment type="PTM">
    <text evidence="1">Phosphorylated by MAPK1/ERK2 and MAPK3/ERK1.</text>
</comment>
<comment type="miscellaneous">
    <text evidence="1">The helix-loop-helix and basic motifs form a SPZ1 specific bHLH different from the classical one.</text>
</comment>
<evidence type="ECO:0000250" key="1"/>
<evidence type="ECO:0000255" key="2"/>
<evidence type="ECO:0000256" key="3">
    <source>
        <dbReference type="SAM" id="MobiDB-lite"/>
    </source>
</evidence>
<evidence type="ECO:0007744" key="4">
    <source>
    </source>
</evidence>
<protein>
    <recommendedName>
        <fullName>Spermatogenic leucine zipper protein 1</fullName>
    </recommendedName>
</protein>
<keyword id="KW-0175">Coiled coil</keyword>
<keyword id="KW-0963">Cytoplasm</keyword>
<keyword id="KW-0238">DNA-binding</keyword>
<keyword id="KW-0539">Nucleus</keyword>
<keyword id="KW-0597">Phosphoprotein</keyword>
<keyword id="KW-1185">Reference proteome</keyword>
<keyword id="KW-0804">Transcription</keyword>
<keyword id="KW-0805">Transcription regulation</keyword>